<accession>Q08931</accession>
<accession>D6W3H6</accession>
<reference key="1">
    <citation type="journal article" date="1997" name="Nature">
        <title>The nucleotide sequence of Saccharomyces cerevisiae chromosome XVI.</title>
        <authorList>
            <person name="Bussey H."/>
            <person name="Storms R.K."/>
            <person name="Ahmed A."/>
            <person name="Albermann K."/>
            <person name="Allen E."/>
            <person name="Ansorge W."/>
            <person name="Araujo R."/>
            <person name="Aparicio A."/>
            <person name="Barrell B.G."/>
            <person name="Badcock K."/>
            <person name="Benes V."/>
            <person name="Botstein D."/>
            <person name="Bowman S."/>
            <person name="Brueckner M."/>
            <person name="Carpenter J."/>
            <person name="Cherry J.M."/>
            <person name="Chung E."/>
            <person name="Churcher C.M."/>
            <person name="Coster F."/>
            <person name="Davis K."/>
            <person name="Davis R.W."/>
            <person name="Dietrich F.S."/>
            <person name="Delius H."/>
            <person name="DiPaolo T."/>
            <person name="Dubois E."/>
            <person name="Duesterhoeft A."/>
            <person name="Duncan M."/>
            <person name="Floeth M."/>
            <person name="Fortin N."/>
            <person name="Friesen J.D."/>
            <person name="Fritz C."/>
            <person name="Goffeau A."/>
            <person name="Hall J."/>
            <person name="Hebling U."/>
            <person name="Heumann K."/>
            <person name="Hilbert H."/>
            <person name="Hillier L.W."/>
            <person name="Hunicke-Smith S."/>
            <person name="Hyman R.W."/>
            <person name="Johnston M."/>
            <person name="Kalman S."/>
            <person name="Kleine K."/>
            <person name="Komp C."/>
            <person name="Kurdi O."/>
            <person name="Lashkari D."/>
            <person name="Lew H."/>
            <person name="Lin A."/>
            <person name="Lin D."/>
            <person name="Louis E.J."/>
            <person name="Marathe R."/>
            <person name="Messenguy F."/>
            <person name="Mewes H.-W."/>
            <person name="Mirtipati S."/>
            <person name="Moestl D."/>
            <person name="Mueller-Auer S."/>
            <person name="Namath A."/>
            <person name="Nentwich U."/>
            <person name="Oefner P."/>
            <person name="Pearson D."/>
            <person name="Petel F.X."/>
            <person name="Pohl T.M."/>
            <person name="Purnelle B."/>
            <person name="Rajandream M.A."/>
            <person name="Rechmann S."/>
            <person name="Rieger M."/>
            <person name="Riles L."/>
            <person name="Roberts D."/>
            <person name="Schaefer M."/>
            <person name="Scharfe M."/>
            <person name="Scherens B."/>
            <person name="Schramm S."/>
            <person name="Schroeder M."/>
            <person name="Sdicu A.-M."/>
            <person name="Tettelin H."/>
            <person name="Urrestarazu L.A."/>
            <person name="Ushinsky S."/>
            <person name="Vierendeels F."/>
            <person name="Vissers S."/>
            <person name="Voss H."/>
            <person name="Walsh S.V."/>
            <person name="Wambutt R."/>
            <person name="Wang Y."/>
            <person name="Wedler E."/>
            <person name="Wedler H."/>
            <person name="Winnett E."/>
            <person name="Zhong W.-W."/>
            <person name="Zollner A."/>
            <person name="Vo D.H."/>
            <person name="Hani J."/>
        </authorList>
    </citation>
    <scope>NUCLEOTIDE SEQUENCE [LARGE SCALE GENOMIC DNA]</scope>
    <source>
        <strain>ATCC 204508 / S288c</strain>
    </source>
</reference>
<reference key="2">
    <citation type="journal article" date="2014" name="G3 (Bethesda)">
        <title>The reference genome sequence of Saccharomyces cerevisiae: Then and now.</title>
        <authorList>
            <person name="Engel S.R."/>
            <person name="Dietrich F.S."/>
            <person name="Fisk D.G."/>
            <person name="Binkley G."/>
            <person name="Balakrishnan R."/>
            <person name="Costanzo M.C."/>
            <person name="Dwight S.S."/>
            <person name="Hitz B.C."/>
            <person name="Karra K."/>
            <person name="Nash R.S."/>
            <person name="Weng S."/>
            <person name="Wong E.D."/>
            <person name="Lloyd P."/>
            <person name="Skrzypek M.S."/>
            <person name="Miyasato S.R."/>
            <person name="Simison M."/>
            <person name="Cherry J.M."/>
        </authorList>
    </citation>
    <scope>GENOME REANNOTATION</scope>
    <source>
        <strain>ATCC 204508 / S288c</strain>
    </source>
</reference>
<reference key="3">
    <citation type="journal article" date="2007" name="Genome Res.">
        <title>Approaching a complete repository of sequence-verified protein-encoding clones for Saccharomyces cerevisiae.</title>
        <authorList>
            <person name="Hu Y."/>
            <person name="Rolfs A."/>
            <person name="Bhullar B."/>
            <person name="Murthy T.V.S."/>
            <person name="Zhu C."/>
            <person name="Berger M.F."/>
            <person name="Camargo A.A."/>
            <person name="Kelley F."/>
            <person name="McCarron S."/>
            <person name="Jepson D."/>
            <person name="Richardson A."/>
            <person name="Raphael J."/>
            <person name="Moreira D."/>
            <person name="Taycher E."/>
            <person name="Zuo D."/>
            <person name="Mohr S."/>
            <person name="Kane M.F."/>
            <person name="Williamson J."/>
            <person name="Simpson A.J.G."/>
            <person name="Bulyk M.L."/>
            <person name="Harlow E."/>
            <person name="Marsischky G."/>
            <person name="Kolodner R.D."/>
            <person name="LaBaer J."/>
        </authorList>
    </citation>
    <scope>NUCLEOTIDE SEQUENCE [GENOMIC DNA]</scope>
    <source>
        <strain>ATCC 204508 / S288c</strain>
    </source>
</reference>
<reference key="4">
    <citation type="journal article" date="2000" name="J. Cell Biol.">
        <title>Prm1p, a pheromone-regulated multispanning membrane protein, facilitates plasma membrane fusion during yeast mating.</title>
        <authorList>
            <person name="Heiman M.G."/>
            <person name="Walter P."/>
        </authorList>
    </citation>
    <scope>NOMENCLATURE</scope>
    <scope>INDUCTION</scope>
</reference>
<reference key="5">
    <citation type="journal article" date="2003" name="J. Biol. Chem.">
        <title>Bipartite signals mediate subcellular targeting of tail-anchored membrane proteins in Saccharomyces cerevisiae.</title>
        <authorList>
            <person name="Beilharz T."/>
            <person name="Egan B."/>
            <person name="Silver P.A."/>
            <person name="Hofmann K."/>
            <person name="Lithgow T."/>
        </authorList>
    </citation>
    <scope>FUNCTION</scope>
    <scope>SUBCELLULAR LOCATION</scope>
</reference>
<reference key="6">
    <citation type="journal article" date="2007" name="BMC Cell Biol.">
        <title>Immobility, inheritance and plasticity of shape of the yeast nucleus.</title>
        <authorList>
            <person name="Hattier T."/>
            <person name="Andrulis E.D."/>
            <person name="Tartakoff A.M."/>
        </authorList>
    </citation>
    <scope>SUBCELLULAR LOCATION</scope>
</reference>
<reference key="7">
    <citation type="journal article" date="2008" name="Nature">
        <title>A mechanism for asymmetric segregation of age during yeast budding.</title>
        <authorList>
            <person name="Shcheprova Z."/>
            <person name="Baldi S."/>
            <person name="Frei S.B."/>
            <person name="Gonnet G."/>
            <person name="Barral Y."/>
        </authorList>
    </citation>
    <scope>SUBCELLULAR LOCATION</scope>
</reference>
<reference key="8">
    <citation type="journal article" date="2009" name="Mol. Biol. Cell">
        <title>Prm3p is a pheromone-induced peripheral nuclear envelope protein required for yeast nuclear fusion.</title>
        <authorList>
            <person name="Shen S."/>
            <person name="Tobery C.E."/>
            <person name="Rose M.D."/>
        </authorList>
    </citation>
    <scope>FUNCTION</scope>
    <scope>SUBCELLULAR LOCATION</scope>
    <scope>INTERACTION WITH KAR5</scope>
    <scope>MUTAGENESIS OF TYR-106; GLY-108; GLY-112; PHE-114; LEU-115; THR-121 AND VAL-122</scope>
</reference>
<reference key="9">
    <citation type="journal article" date="2009" name="Mol. Biol. Cell">
        <title>Nuclear fusion and genome encounter during yeast zygote formation.</title>
        <authorList>
            <person name="Tartakoff A.M."/>
            <person name="Jaiswal P."/>
        </authorList>
    </citation>
    <scope>SUBCELLULAR LOCATION</scope>
</reference>
<reference key="10">
    <citation type="journal article" date="2009" name="Mol. Biol. Cell">
        <title>Distinct roles for key karyogamy proteins during yeast nuclear fusion.</title>
        <authorList>
            <person name="Melloy P."/>
            <person name="Shen S."/>
            <person name="White E."/>
            <person name="Rose M.D."/>
        </authorList>
    </citation>
    <scope>FUNCTION</scope>
</reference>
<reference key="11">
    <citation type="journal article" date="2010" name="FEBS J.">
        <title>Organizational constraints on Ste12 cis-elements for a pheromone response in Saccharomyces cerevisiae.</title>
        <authorList>
            <person name="Su T.C."/>
            <person name="Tamarkina E."/>
            <person name="Sadowski I."/>
        </authorList>
    </citation>
    <scope>INDUCTION</scope>
</reference>
<evidence type="ECO:0000255" key="1"/>
<evidence type="ECO:0000256" key="2">
    <source>
        <dbReference type="SAM" id="MobiDB-lite"/>
    </source>
</evidence>
<evidence type="ECO:0000269" key="3">
    <source>
    </source>
</evidence>
<evidence type="ECO:0000269" key="4">
    <source>
    </source>
</evidence>
<evidence type="ECO:0000269" key="5">
    <source>
    </source>
</evidence>
<evidence type="ECO:0000269" key="6">
    <source>
    </source>
</evidence>
<evidence type="ECO:0000269" key="7">
    <source>
    </source>
</evidence>
<evidence type="ECO:0000305" key="8">
    <source>
    </source>
</evidence>
<name>PRM3_YEAST</name>
<protein>
    <recommendedName>
        <fullName>Pheromone-regulated membrane protein 3</fullName>
    </recommendedName>
</protein>
<proteinExistence type="evidence at protein level"/>
<gene>
    <name type="primary">PRM3</name>
    <name type="ordered locus">YPL192C</name>
</gene>
<dbReference type="EMBL" id="Z73548">
    <property type="protein sequence ID" value="CAA97905.1"/>
    <property type="molecule type" value="Genomic_DNA"/>
</dbReference>
<dbReference type="EMBL" id="AY693130">
    <property type="protein sequence ID" value="AAT93149.1"/>
    <property type="molecule type" value="Genomic_DNA"/>
</dbReference>
<dbReference type="EMBL" id="BK006949">
    <property type="protein sequence ID" value="DAA11242.1"/>
    <property type="molecule type" value="Genomic_DNA"/>
</dbReference>
<dbReference type="PIR" id="S65211">
    <property type="entry name" value="S65211"/>
</dbReference>
<dbReference type="RefSeq" id="NP_015132.1">
    <property type="nucleotide sequence ID" value="NM_001184006.1"/>
</dbReference>
<dbReference type="BioGRID" id="35991">
    <property type="interactions" value="59"/>
</dbReference>
<dbReference type="DIP" id="DIP-1699N"/>
<dbReference type="FunCoup" id="Q08931">
    <property type="interactions" value="35"/>
</dbReference>
<dbReference type="IntAct" id="Q08931">
    <property type="interactions" value="7"/>
</dbReference>
<dbReference type="MINT" id="Q08931"/>
<dbReference type="STRING" id="4932.YPL192C"/>
<dbReference type="iPTMnet" id="Q08931"/>
<dbReference type="PaxDb" id="4932-YPL192C"/>
<dbReference type="PeptideAtlas" id="Q08931"/>
<dbReference type="EnsemblFungi" id="YPL192C_mRNA">
    <property type="protein sequence ID" value="YPL192C"/>
    <property type="gene ID" value="YPL192C"/>
</dbReference>
<dbReference type="GeneID" id="855909"/>
<dbReference type="KEGG" id="sce:YPL192C"/>
<dbReference type="AGR" id="SGD:S000006113"/>
<dbReference type="SGD" id="S000006113">
    <property type="gene designation" value="PRM3"/>
</dbReference>
<dbReference type="VEuPathDB" id="FungiDB:YPL192C"/>
<dbReference type="HOGENOM" id="CLU_1897414_0_0_1"/>
<dbReference type="InParanoid" id="Q08931"/>
<dbReference type="OrthoDB" id="4059397at2759"/>
<dbReference type="BioCyc" id="YEAST:G3O-34085-MONOMER"/>
<dbReference type="BioGRID-ORCS" id="855909">
    <property type="hits" value="0 hits in 10 CRISPR screens"/>
</dbReference>
<dbReference type="CD-CODE" id="876000F7">
    <property type="entry name" value="Centrosome"/>
</dbReference>
<dbReference type="PRO" id="PR:Q08931"/>
<dbReference type="Proteomes" id="UP000002311">
    <property type="component" value="Chromosome XVI"/>
</dbReference>
<dbReference type="RNAct" id="Q08931">
    <property type="molecule type" value="protein"/>
</dbReference>
<dbReference type="GO" id="GO:0005737">
    <property type="term" value="C:cytoplasm"/>
    <property type="evidence" value="ECO:0007669"/>
    <property type="project" value="UniProtKB-KW"/>
</dbReference>
<dbReference type="GO" id="GO:0005635">
    <property type="term" value="C:nuclear envelope"/>
    <property type="evidence" value="ECO:0000314"/>
    <property type="project" value="SGD"/>
</dbReference>
<dbReference type="GO" id="GO:0005640">
    <property type="term" value="C:nuclear outer membrane"/>
    <property type="evidence" value="ECO:0007669"/>
    <property type="project" value="UniProtKB-SubCell"/>
</dbReference>
<dbReference type="GO" id="GO:0034399">
    <property type="term" value="C:nuclear periphery"/>
    <property type="evidence" value="ECO:0007005"/>
    <property type="project" value="SGD"/>
</dbReference>
<dbReference type="GO" id="GO:0005816">
    <property type="term" value="C:spindle pole body"/>
    <property type="evidence" value="ECO:0000314"/>
    <property type="project" value="SGD"/>
</dbReference>
<dbReference type="GO" id="GO:0000742">
    <property type="term" value="P:karyogamy involved in conjugation with cellular fusion"/>
    <property type="evidence" value="ECO:0000315"/>
    <property type="project" value="SGD"/>
</dbReference>
<dbReference type="GO" id="GO:0048288">
    <property type="term" value="P:nuclear membrane fusion involved in karyogamy"/>
    <property type="evidence" value="ECO:0000315"/>
    <property type="project" value="SGD"/>
</dbReference>
<keyword id="KW-0963">Cytoplasm</keyword>
<keyword id="KW-0206">Cytoskeleton</keyword>
<keyword id="KW-0472">Membrane</keyword>
<keyword id="KW-0539">Nucleus</keyword>
<keyword id="KW-1185">Reference proteome</keyword>
<keyword id="KW-0812">Transmembrane</keyword>
<keyword id="KW-1133">Transmembrane helix</keyword>
<feature type="chain" id="PRO_0000262749" description="Pheromone-regulated membrane protein 3">
    <location>
        <begin position="1"/>
        <end position="133"/>
    </location>
</feature>
<feature type="topological domain" description="Nuclear" evidence="1">
    <location>
        <begin position="1"/>
        <end position="104"/>
    </location>
</feature>
<feature type="transmembrane region" description="Helical" evidence="1">
    <location>
        <begin position="105"/>
        <end position="127"/>
    </location>
</feature>
<feature type="topological domain" description="Perinuclear space" evidence="1">
    <location>
        <begin position="128"/>
        <end position="133"/>
    </location>
</feature>
<feature type="region of interest" description="Disordered" evidence="2">
    <location>
        <begin position="36"/>
        <end position="100"/>
    </location>
</feature>
<feature type="short sequence motif" description="Bipartite nuclear localization signal">
    <location>
        <begin position="69"/>
        <end position="75"/>
    </location>
</feature>
<feature type="compositionally biased region" description="Basic and acidic residues" evidence="2">
    <location>
        <begin position="90"/>
        <end position="100"/>
    </location>
</feature>
<feature type="mutagenesis site" description="In pmr3-7; leads to mislocalization and decreases nuclear fusion efficiency when temperature rises." evidence="5">
    <original>Y</original>
    <variation>H</variation>
    <location>
        <position position="106"/>
    </location>
</feature>
<feature type="mutagenesis site" description="In pmr3-1; decreases nuclear fusion efficiency." evidence="5">
    <original>G</original>
    <variation>S</variation>
    <location>
        <position position="108"/>
    </location>
</feature>
<feature type="mutagenesis site" description="In pmr3-8; leads to mislocalization and decreases nuclear fusion efficiency." evidence="5">
    <original>G</original>
    <variation>S</variation>
    <location>
        <position position="112"/>
    </location>
</feature>
<feature type="mutagenesis site" description="In pmr3-3; leads to mislocalization and decreases nuclear fusion efficiency." evidence="5">
    <original>F</original>
    <variation>S</variation>
    <location>
        <position position="114"/>
    </location>
</feature>
<feature type="mutagenesis site" description="In pmr3-5; leads to mislocalization and decreases nuclear fusion efficiency." evidence="5">
    <original>L</original>
    <variation>R</variation>
    <location>
        <position position="115"/>
    </location>
</feature>
<feature type="mutagenesis site" description="In pmr3-6; leads to mislocalization." evidence="5">
    <original>T</original>
    <variation>A</variation>
    <location>
        <position position="121"/>
    </location>
</feature>
<feature type="mutagenesis site" description="In pmr3-2; leads to mislocalization and decreases nuclear fusion efficiency." evidence="5">
    <original>V</original>
    <variation>D</variation>
    <location>
        <position position="122"/>
    </location>
</feature>
<comment type="function">
    <text evidence="4 5 6">Required for the fusion of nuclear envelopes during mating, ensuring proper karyogamy. Plays a role in the initiation of outer nuclear envelope fusion.</text>
</comment>
<comment type="subunit">
    <text evidence="5">Interacts with KAR5.</text>
</comment>
<comment type="subcellular location">
    <subcellularLocation>
        <location>Nucleus outer membrane</location>
        <topology>Single-pass membrane protein</topology>
        <orientation>Cytoplasmic side</orientation>
    </subcellularLocation>
    <subcellularLocation>
        <location>Cytoplasm</location>
        <location>Cytoskeleton</location>
        <location>Microtubule organizing center</location>
        <location>Spindle pole body</location>
    </subcellularLocation>
</comment>
<comment type="induction">
    <text evidence="3 7">By pheromone. Expression is controlled by the STE12 transcription factor that binds to pheromone-response cis-elements (PREs) in the promoter of target genes.</text>
</comment>
<comment type="caution">
    <text evidence="8">Was originally shown to be localized in the inner nuclear membrane by using a truncated protein (PubMed:12514182). Was used as an inner nuclear membrane marker (PubMed:17996101, PubMed:18660802, PubMed:19369416). However, more recent studies showed that it is localized in the nuclear outer membrane, which is consistent with a function in the initiation of nuclear fusion (PubMed:19297527, PubMed:19570912).</text>
</comment>
<organism>
    <name type="scientific">Saccharomyces cerevisiae (strain ATCC 204508 / S288c)</name>
    <name type="common">Baker's yeast</name>
    <dbReference type="NCBI Taxonomy" id="559292"/>
    <lineage>
        <taxon>Eukaryota</taxon>
        <taxon>Fungi</taxon>
        <taxon>Dikarya</taxon>
        <taxon>Ascomycota</taxon>
        <taxon>Saccharomycotina</taxon>
        <taxon>Saccharomycetes</taxon>
        <taxon>Saccharomycetales</taxon>
        <taxon>Saccharomycetaceae</taxon>
        <taxon>Saccharomyces</taxon>
    </lineage>
</organism>
<sequence length="133" mass="14428">MTAMKEDNAALITLKKNNDQEKLRVHKLTDASSNSADGFVINKAKNGGPLNKKSLVNNEQHIKKAVSPGRVRKHKTTTSSTKSRTKSKKKDASESKVQRENKGSFYQGAIFGSFLGAAVTTVLSNLAVKALQN</sequence>